<accession>Q7VQI9</accession>
<gene>
    <name evidence="1" type="primary">murD</name>
    <name type="ordered locus">Bfl140</name>
</gene>
<sequence>MIRKYQKSNVVIIGFGKTGLSCLNFFLIRGVIPKIIDTRQYPSEMKNLPSFVEYCFGRLNDFWILNANLIVVSPGVRLDHPIIIEAMKLGIEVVGDIELFVREISAPIIAITGSNGKSTVTQLVSKMAKQAGWSVGVAGNIGVPVLSLLKKQYELYVLEISSFQLDVTYSLRATAATILNISVDHMDRYPKGLEEYICSKKRIYHNSYFCVVNDSDPLTKPLLNDGIYHVSFSMNSKSADYRLEYYKGNNWIVANGEYVLSCAELKINNCMNYMNMLSALALSDIVKIPRIVSLQVLRFFSGLSHRFQLVYKNRNVCWINDSKATNVGATKEAINNTIITLRDGNLHLLLGGDGKLANFFELSCLIKHYAIHLYCFGKDGVCLTQSGFNDVFLSNNIIDAMYIISRRVQRKDIVLLSPACASLDQFSSFRARGNLFTYLAQRLG</sequence>
<organism>
    <name type="scientific">Blochmanniella floridana</name>
    <dbReference type="NCBI Taxonomy" id="203907"/>
    <lineage>
        <taxon>Bacteria</taxon>
        <taxon>Pseudomonadati</taxon>
        <taxon>Pseudomonadota</taxon>
        <taxon>Gammaproteobacteria</taxon>
        <taxon>Enterobacterales</taxon>
        <taxon>Enterobacteriaceae</taxon>
        <taxon>ant endosymbionts</taxon>
        <taxon>Candidatus Blochmanniella</taxon>
    </lineage>
</organism>
<evidence type="ECO:0000255" key="1">
    <source>
        <dbReference type="HAMAP-Rule" id="MF_00639"/>
    </source>
</evidence>
<feature type="chain" id="PRO_0000108975" description="UDP-N-acetylmuramoylalanine--D-glutamate ligase">
    <location>
        <begin position="1"/>
        <end position="444"/>
    </location>
</feature>
<feature type="binding site" evidence="1">
    <location>
        <begin position="113"/>
        <end position="119"/>
    </location>
    <ligand>
        <name>ATP</name>
        <dbReference type="ChEBI" id="CHEBI:30616"/>
    </ligand>
</feature>
<protein>
    <recommendedName>
        <fullName evidence="1">UDP-N-acetylmuramoylalanine--D-glutamate ligase</fullName>
        <ecNumber evidence="1">6.3.2.9</ecNumber>
    </recommendedName>
    <alternativeName>
        <fullName evidence="1">D-glutamic acid-adding enzyme</fullName>
    </alternativeName>
    <alternativeName>
        <fullName evidence="1">UDP-N-acetylmuramoyl-L-alanyl-D-glutamate synthetase</fullName>
    </alternativeName>
</protein>
<dbReference type="EC" id="6.3.2.9" evidence="1"/>
<dbReference type="EMBL" id="BX248583">
    <property type="protein sequence ID" value="CAD83661.1"/>
    <property type="molecule type" value="Genomic_DNA"/>
</dbReference>
<dbReference type="SMR" id="Q7VQI9"/>
<dbReference type="STRING" id="203907.Bfl140"/>
<dbReference type="KEGG" id="bfl:Bfl140"/>
<dbReference type="eggNOG" id="COG0771">
    <property type="taxonomic scope" value="Bacteria"/>
</dbReference>
<dbReference type="HOGENOM" id="CLU_032540_1_0_6"/>
<dbReference type="OrthoDB" id="9809796at2"/>
<dbReference type="UniPathway" id="UPA00219"/>
<dbReference type="Proteomes" id="UP000002192">
    <property type="component" value="Chromosome"/>
</dbReference>
<dbReference type="GO" id="GO:0005737">
    <property type="term" value="C:cytoplasm"/>
    <property type="evidence" value="ECO:0007669"/>
    <property type="project" value="UniProtKB-SubCell"/>
</dbReference>
<dbReference type="GO" id="GO:0005524">
    <property type="term" value="F:ATP binding"/>
    <property type="evidence" value="ECO:0007669"/>
    <property type="project" value="UniProtKB-UniRule"/>
</dbReference>
<dbReference type="GO" id="GO:0008764">
    <property type="term" value="F:UDP-N-acetylmuramoylalanine-D-glutamate ligase activity"/>
    <property type="evidence" value="ECO:0007669"/>
    <property type="project" value="UniProtKB-UniRule"/>
</dbReference>
<dbReference type="GO" id="GO:0051301">
    <property type="term" value="P:cell division"/>
    <property type="evidence" value="ECO:0007669"/>
    <property type="project" value="UniProtKB-KW"/>
</dbReference>
<dbReference type="GO" id="GO:0071555">
    <property type="term" value="P:cell wall organization"/>
    <property type="evidence" value="ECO:0007669"/>
    <property type="project" value="UniProtKB-KW"/>
</dbReference>
<dbReference type="GO" id="GO:0009252">
    <property type="term" value="P:peptidoglycan biosynthetic process"/>
    <property type="evidence" value="ECO:0007669"/>
    <property type="project" value="UniProtKB-UniRule"/>
</dbReference>
<dbReference type="GO" id="GO:0008360">
    <property type="term" value="P:regulation of cell shape"/>
    <property type="evidence" value="ECO:0007669"/>
    <property type="project" value="UniProtKB-KW"/>
</dbReference>
<dbReference type="Gene3D" id="3.90.190.20">
    <property type="entry name" value="Mur ligase, C-terminal domain"/>
    <property type="match status" value="1"/>
</dbReference>
<dbReference type="Gene3D" id="3.40.1190.10">
    <property type="entry name" value="Mur-like, catalytic domain"/>
    <property type="match status" value="1"/>
</dbReference>
<dbReference type="Gene3D" id="3.40.50.720">
    <property type="entry name" value="NAD(P)-binding Rossmann-like Domain"/>
    <property type="match status" value="1"/>
</dbReference>
<dbReference type="HAMAP" id="MF_00639">
    <property type="entry name" value="MurD"/>
    <property type="match status" value="1"/>
</dbReference>
<dbReference type="InterPro" id="IPR036565">
    <property type="entry name" value="Mur-like_cat_sf"/>
</dbReference>
<dbReference type="InterPro" id="IPR036615">
    <property type="entry name" value="Mur_ligase_C_dom_sf"/>
</dbReference>
<dbReference type="InterPro" id="IPR013221">
    <property type="entry name" value="Mur_ligase_cen"/>
</dbReference>
<dbReference type="InterPro" id="IPR005762">
    <property type="entry name" value="MurD"/>
</dbReference>
<dbReference type="NCBIfam" id="TIGR01087">
    <property type="entry name" value="murD"/>
    <property type="match status" value="1"/>
</dbReference>
<dbReference type="PANTHER" id="PTHR43692">
    <property type="entry name" value="UDP-N-ACETYLMURAMOYLALANINE--D-GLUTAMATE LIGASE"/>
    <property type="match status" value="1"/>
</dbReference>
<dbReference type="PANTHER" id="PTHR43692:SF1">
    <property type="entry name" value="UDP-N-ACETYLMURAMOYLALANINE--D-GLUTAMATE LIGASE"/>
    <property type="match status" value="1"/>
</dbReference>
<dbReference type="Pfam" id="PF08245">
    <property type="entry name" value="Mur_ligase_M"/>
    <property type="match status" value="1"/>
</dbReference>
<dbReference type="Pfam" id="PF21799">
    <property type="entry name" value="MurD-like_N"/>
    <property type="match status" value="1"/>
</dbReference>
<dbReference type="SUPFAM" id="SSF51984">
    <property type="entry name" value="MurCD N-terminal domain"/>
    <property type="match status" value="1"/>
</dbReference>
<dbReference type="SUPFAM" id="SSF53623">
    <property type="entry name" value="MurD-like peptide ligases, catalytic domain"/>
    <property type="match status" value="1"/>
</dbReference>
<dbReference type="SUPFAM" id="SSF53244">
    <property type="entry name" value="MurD-like peptide ligases, peptide-binding domain"/>
    <property type="match status" value="1"/>
</dbReference>
<proteinExistence type="inferred from homology"/>
<comment type="function">
    <text evidence="1">Cell wall formation. Catalyzes the addition of glutamate to the nucleotide precursor UDP-N-acetylmuramoyl-L-alanine (UMA).</text>
</comment>
<comment type="catalytic activity">
    <reaction evidence="1">
        <text>UDP-N-acetyl-alpha-D-muramoyl-L-alanine + D-glutamate + ATP = UDP-N-acetyl-alpha-D-muramoyl-L-alanyl-D-glutamate + ADP + phosphate + H(+)</text>
        <dbReference type="Rhea" id="RHEA:16429"/>
        <dbReference type="ChEBI" id="CHEBI:15378"/>
        <dbReference type="ChEBI" id="CHEBI:29986"/>
        <dbReference type="ChEBI" id="CHEBI:30616"/>
        <dbReference type="ChEBI" id="CHEBI:43474"/>
        <dbReference type="ChEBI" id="CHEBI:83898"/>
        <dbReference type="ChEBI" id="CHEBI:83900"/>
        <dbReference type="ChEBI" id="CHEBI:456216"/>
        <dbReference type="EC" id="6.3.2.9"/>
    </reaction>
</comment>
<comment type="pathway">
    <text evidence="1">Cell wall biogenesis; peptidoglycan biosynthesis.</text>
</comment>
<comment type="subcellular location">
    <subcellularLocation>
        <location evidence="1">Cytoplasm</location>
    </subcellularLocation>
</comment>
<comment type="similarity">
    <text evidence="1">Belongs to the MurCDEF family.</text>
</comment>
<keyword id="KW-0067">ATP-binding</keyword>
<keyword id="KW-0131">Cell cycle</keyword>
<keyword id="KW-0132">Cell division</keyword>
<keyword id="KW-0133">Cell shape</keyword>
<keyword id="KW-0961">Cell wall biogenesis/degradation</keyword>
<keyword id="KW-0963">Cytoplasm</keyword>
<keyword id="KW-0436">Ligase</keyword>
<keyword id="KW-0547">Nucleotide-binding</keyword>
<keyword id="KW-0573">Peptidoglycan synthesis</keyword>
<keyword id="KW-1185">Reference proteome</keyword>
<name>MURD_BLOFL</name>
<reference key="1">
    <citation type="journal article" date="2003" name="Proc. Natl. Acad. Sci. U.S.A.">
        <title>The genome sequence of Blochmannia floridanus: comparative analysis of reduced genomes.</title>
        <authorList>
            <person name="Gil R."/>
            <person name="Silva F.J."/>
            <person name="Zientz E."/>
            <person name="Delmotte F."/>
            <person name="Gonzalez-Candelas F."/>
            <person name="Latorre A."/>
            <person name="Rausell C."/>
            <person name="Kamerbeek J."/>
            <person name="Gadau J."/>
            <person name="Hoelldobler B."/>
            <person name="van Ham R.C.H.J."/>
            <person name="Gross R."/>
            <person name="Moya A."/>
        </authorList>
    </citation>
    <scope>NUCLEOTIDE SEQUENCE [LARGE SCALE GENOMIC DNA]</scope>
</reference>